<comment type="function">
    <text evidence="1">ATP-dependent specificity component of the Clp protease. It directs the protease to specific substrates. Can perform chaperone functions in the absence of ClpP.</text>
</comment>
<comment type="subunit">
    <text evidence="1">Component of the ClpX-ClpP complex. Forms a hexameric ring that, in the presence of ATP, binds to fourteen ClpP subunits assembled into a disk-like structure with a central cavity, resembling the structure of eukaryotic proteasomes.</text>
</comment>
<comment type="similarity">
    <text evidence="1">Belongs to the ClpX chaperone family.</text>
</comment>
<evidence type="ECO:0000255" key="1">
    <source>
        <dbReference type="HAMAP-Rule" id="MF_00175"/>
    </source>
</evidence>
<evidence type="ECO:0000255" key="2">
    <source>
        <dbReference type="PROSITE-ProRule" id="PRU01250"/>
    </source>
</evidence>
<protein>
    <recommendedName>
        <fullName evidence="1">ATP-dependent Clp protease ATP-binding subunit ClpX</fullName>
    </recommendedName>
</protein>
<reference key="1">
    <citation type="journal article" date="2006" name="Proc. Natl. Acad. Sci. U.S.A.">
        <title>Molecular genetic anatomy of inter- and intraserotype variation in the human bacterial pathogen group A Streptococcus.</title>
        <authorList>
            <person name="Beres S.B."/>
            <person name="Richter E.W."/>
            <person name="Nagiec M.J."/>
            <person name="Sumby P."/>
            <person name="Porcella S.F."/>
            <person name="DeLeo F.R."/>
            <person name="Musser J.M."/>
        </authorList>
    </citation>
    <scope>NUCLEOTIDE SEQUENCE [LARGE SCALE GENOMIC DNA]</scope>
    <source>
        <strain>MGAS10750</strain>
    </source>
</reference>
<name>CLPX_STRPF</name>
<gene>
    <name evidence="1" type="primary">clpX</name>
    <name type="ordered locus">MGAS10750_Spy0783</name>
</gene>
<keyword id="KW-0067">ATP-binding</keyword>
<keyword id="KW-0143">Chaperone</keyword>
<keyword id="KW-0479">Metal-binding</keyword>
<keyword id="KW-0547">Nucleotide-binding</keyword>
<keyword id="KW-0862">Zinc</keyword>
<proteinExistence type="inferred from homology"/>
<sequence length="409" mass="44991">MAGSRTNDIKVYCSFCGKSQDDVKKIIAGNNVFICNECVALSQEIIKEELAEEVLADLTEVPKPKELLDVLNQYVVGQDRAKRALSVAVYNHYKRVSFTESRDDDDVDLQKSNILMIGPTGSGKTFLAQTLAKSLNVPFAIADATSLTEAGYVGEDVENILLKLIQAADYNVERAERGIIYVDEIDKIAKKGENVSITRDVSGEGVQQALLKIIEGTVASVPPQGGRKHPNQEMIQIDTKNILFIVGGAFDGIEEIVKQRLGEKVIGFGQNSRKIDDNASYMQEIISEDIQKFGLIPEFIGRLPVVAALEQLNTSDLIQILTEPRNALVKQYQALLSYDGVELAFDKEALEAIANKAIERKTGARGLRSIIEETMLDIMFEIPSQEDVTKVRITKAAVEGKSKPVLETA</sequence>
<organism>
    <name type="scientific">Streptococcus pyogenes serotype M4 (strain MGAS10750)</name>
    <dbReference type="NCBI Taxonomy" id="370554"/>
    <lineage>
        <taxon>Bacteria</taxon>
        <taxon>Bacillati</taxon>
        <taxon>Bacillota</taxon>
        <taxon>Bacilli</taxon>
        <taxon>Lactobacillales</taxon>
        <taxon>Streptococcaceae</taxon>
        <taxon>Streptococcus</taxon>
    </lineage>
</organism>
<feature type="chain" id="PRO_1000024681" description="ATP-dependent Clp protease ATP-binding subunit ClpX">
    <location>
        <begin position="1"/>
        <end position="409"/>
    </location>
</feature>
<feature type="domain" description="ClpX-type ZB" evidence="2">
    <location>
        <begin position="1"/>
        <end position="54"/>
    </location>
</feature>
<feature type="binding site" evidence="2">
    <location>
        <position position="13"/>
    </location>
    <ligand>
        <name>Zn(2+)</name>
        <dbReference type="ChEBI" id="CHEBI:29105"/>
    </ligand>
</feature>
<feature type="binding site" evidence="2">
    <location>
        <position position="16"/>
    </location>
    <ligand>
        <name>Zn(2+)</name>
        <dbReference type="ChEBI" id="CHEBI:29105"/>
    </ligand>
</feature>
<feature type="binding site" evidence="2">
    <location>
        <position position="35"/>
    </location>
    <ligand>
        <name>Zn(2+)</name>
        <dbReference type="ChEBI" id="CHEBI:29105"/>
    </ligand>
</feature>
<feature type="binding site" evidence="2">
    <location>
        <position position="38"/>
    </location>
    <ligand>
        <name>Zn(2+)</name>
        <dbReference type="ChEBI" id="CHEBI:29105"/>
    </ligand>
</feature>
<feature type="binding site" evidence="1">
    <location>
        <begin position="119"/>
        <end position="126"/>
    </location>
    <ligand>
        <name>ATP</name>
        <dbReference type="ChEBI" id="CHEBI:30616"/>
    </ligand>
</feature>
<accession>Q1J741</accession>
<dbReference type="EMBL" id="CP000262">
    <property type="protein sequence ID" value="ABF37733.1"/>
    <property type="molecule type" value="Genomic_DNA"/>
</dbReference>
<dbReference type="SMR" id="Q1J741"/>
<dbReference type="KEGG" id="spi:MGAS10750_Spy0783"/>
<dbReference type="HOGENOM" id="CLU_014218_8_2_9"/>
<dbReference type="Proteomes" id="UP000002434">
    <property type="component" value="Chromosome"/>
</dbReference>
<dbReference type="GO" id="GO:0009376">
    <property type="term" value="C:HslUV protease complex"/>
    <property type="evidence" value="ECO:0007669"/>
    <property type="project" value="TreeGrafter"/>
</dbReference>
<dbReference type="GO" id="GO:0005524">
    <property type="term" value="F:ATP binding"/>
    <property type="evidence" value="ECO:0007669"/>
    <property type="project" value="UniProtKB-UniRule"/>
</dbReference>
<dbReference type="GO" id="GO:0016887">
    <property type="term" value="F:ATP hydrolysis activity"/>
    <property type="evidence" value="ECO:0007669"/>
    <property type="project" value="InterPro"/>
</dbReference>
<dbReference type="GO" id="GO:0140662">
    <property type="term" value="F:ATP-dependent protein folding chaperone"/>
    <property type="evidence" value="ECO:0007669"/>
    <property type="project" value="InterPro"/>
</dbReference>
<dbReference type="GO" id="GO:0046983">
    <property type="term" value="F:protein dimerization activity"/>
    <property type="evidence" value="ECO:0007669"/>
    <property type="project" value="InterPro"/>
</dbReference>
<dbReference type="GO" id="GO:0051082">
    <property type="term" value="F:unfolded protein binding"/>
    <property type="evidence" value="ECO:0007669"/>
    <property type="project" value="UniProtKB-UniRule"/>
</dbReference>
<dbReference type="GO" id="GO:0008270">
    <property type="term" value="F:zinc ion binding"/>
    <property type="evidence" value="ECO:0007669"/>
    <property type="project" value="InterPro"/>
</dbReference>
<dbReference type="GO" id="GO:0051301">
    <property type="term" value="P:cell division"/>
    <property type="evidence" value="ECO:0007669"/>
    <property type="project" value="TreeGrafter"/>
</dbReference>
<dbReference type="GO" id="GO:0051603">
    <property type="term" value="P:proteolysis involved in protein catabolic process"/>
    <property type="evidence" value="ECO:0007669"/>
    <property type="project" value="TreeGrafter"/>
</dbReference>
<dbReference type="CDD" id="cd19497">
    <property type="entry name" value="RecA-like_ClpX"/>
    <property type="match status" value="1"/>
</dbReference>
<dbReference type="FunFam" id="1.10.8.60:FF:000002">
    <property type="entry name" value="ATP-dependent Clp protease ATP-binding subunit ClpX"/>
    <property type="match status" value="1"/>
</dbReference>
<dbReference type="FunFam" id="3.40.50.300:FF:000005">
    <property type="entry name" value="ATP-dependent Clp protease ATP-binding subunit ClpX"/>
    <property type="match status" value="1"/>
</dbReference>
<dbReference type="Gene3D" id="1.10.8.60">
    <property type="match status" value="1"/>
</dbReference>
<dbReference type="Gene3D" id="6.20.220.10">
    <property type="entry name" value="ClpX chaperone, C4-type zinc finger domain"/>
    <property type="match status" value="1"/>
</dbReference>
<dbReference type="Gene3D" id="3.40.50.300">
    <property type="entry name" value="P-loop containing nucleotide triphosphate hydrolases"/>
    <property type="match status" value="1"/>
</dbReference>
<dbReference type="HAMAP" id="MF_00175">
    <property type="entry name" value="ClpX"/>
    <property type="match status" value="1"/>
</dbReference>
<dbReference type="InterPro" id="IPR003593">
    <property type="entry name" value="AAA+_ATPase"/>
</dbReference>
<dbReference type="InterPro" id="IPR050052">
    <property type="entry name" value="ATP-dep_Clp_protease_ClpX"/>
</dbReference>
<dbReference type="InterPro" id="IPR003959">
    <property type="entry name" value="ATPase_AAA_core"/>
</dbReference>
<dbReference type="InterPro" id="IPR019489">
    <property type="entry name" value="Clp_ATPase_C"/>
</dbReference>
<dbReference type="InterPro" id="IPR004487">
    <property type="entry name" value="Clp_protease_ATP-bd_su_ClpX"/>
</dbReference>
<dbReference type="InterPro" id="IPR046425">
    <property type="entry name" value="ClpX_bact"/>
</dbReference>
<dbReference type="InterPro" id="IPR027417">
    <property type="entry name" value="P-loop_NTPase"/>
</dbReference>
<dbReference type="InterPro" id="IPR010603">
    <property type="entry name" value="Znf_CppX_C4"/>
</dbReference>
<dbReference type="InterPro" id="IPR038366">
    <property type="entry name" value="Znf_CppX_C4_sf"/>
</dbReference>
<dbReference type="NCBIfam" id="TIGR00382">
    <property type="entry name" value="clpX"/>
    <property type="match status" value="1"/>
</dbReference>
<dbReference type="NCBIfam" id="NF003745">
    <property type="entry name" value="PRK05342.1"/>
    <property type="match status" value="1"/>
</dbReference>
<dbReference type="PANTHER" id="PTHR48102:SF7">
    <property type="entry name" value="ATP-DEPENDENT CLP PROTEASE ATP-BINDING SUBUNIT CLPX-LIKE, MITOCHONDRIAL"/>
    <property type="match status" value="1"/>
</dbReference>
<dbReference type="PANTHER" id="PTHR48102">
    <property type="entry name" value="ATP-DEPENDENT CLP PROTEASE ATP-BINDING SUBUNIT CLPX-LIKE, MITOCHONDRIAL-RELATED"/>
    <property type="match status" value="1"/>
</dbReference>
<dbReference type="Pfam" id="PF07724">
    <property type="entry name" value="AAA_2"/>
    <property type="match status" value="1"/>
</dbReference>
<dbReference type="Pfam" id="PF10431">
    <property type="entry name" value="ClpB_D2-small"/>
    <property type="match status" value="1"/>
</dbReference>
<dbReference type="Pfam" id="PF06689">
    <property type="entry name" value="zf-C4_ClpX"/>
    <property type="match status" value="1"/>
</dbReference>
<dbReference type="SMART" id="SM00382">
    <property type="entry name" value="AAA"/>
    <property type="match status" value="1"/>
</dbReference>
<dbReference type="SMART" id="SM01086">
    <property type="entry name" value="ClpB_D2-small"/>
    <property type="match status" value="1"/>
</dbReference>
<dbReference type="SMART" id="SM00994">
    <property type="entry name" value="zf-C4_ClpX"/>
    <property type="match status" value="1"/>
</dbReference>
<dbReference type="SUPFAM" id="SSF57716">
    <property type="entry name" value="Glucocorticoid receptor-like (DNA-binding domain)"/>
    <property type="match status" value="1"/>
</dbReference>
<dbReference type="SUPFAM" id="SSF52540">
    <property type="entry name" value="P-loop containing nucleoside triphosphate hydrolases"/>
    <property type="match status" value="1"/>
</dbReference>
<dbReference type="PROSITE" id="PS51902">
    <property type="entry name" value="CLPX_ZB"/>
    <property type="match status" value="1"/>
</dbReference>